<gene>
    <name type="primary">TUBG3</name>
    <name type="synonym">TUBC</name>
    <name type="synonym">TUBG</name>
</gene>
<feature type="chain" id="PRO_0000048473" description="Tubulin gamma-3 chain">
    <location>
        <begin position="1" status="less than"/>
        <end position="421"/>
    </location>
</feature>
<feature type="binding site" evidence="2">
    <location>
        <begin position="94"/>
        <end position="100"/>
    </location>
    <ligand>
        <name>GTP</name>
        <dbReference type="ChEBI" id="CHEBI:37565"/>
    </ligand>
</feature>
<feature type="non-terminal residue">
    <location>
        <position position="1"/>
    </location>
</feature>
<organism>
    <name type="scientific">Zea mays</name>
    <name type="common">Maize</name>
    <dbReference type="NCBI Taxonomy" id="4577"/>
    <lineage>
        <taxon>Eukaryota</taxon>
        <taxon>Viridiplantae</taxon>
        <taxon>Streptophyta</taxon>
        <taxon>Embryophyta</taxon>
        <taxon>Tracheophyta</taxon>
        <taxon>Spermatophyta</taxon>
        <taxon>Magnoliopsida</taxon>
        <taxon>Liliopsida</taxon>
        <taxon>Poales</taxon>
        <taxon>Poaceae</taxon>
        <taxon>PACMAD clade</taxon>
        <taxon>Panicoideae</taxon>
        <taxon>Andropogonodae</taxon>
        <taxon>Andropogoneae</taxon>
        <taxon>Tripsacinae</taxon>
        <taxon>Zea</taxon>
    </lineage>
</organism>
<keyword id="KW-0963">Cytoplasm</keyword>
<keyword id="KW-0206">Cytoskeleton</keyword>
<keyword id="KW-0342">GTP-binding</keyword>
<keyword id="KW-0493">Microtubule</keyword>
<keyword id="KW-0547">Nucleotide-binding</keyword>
<keyword id="KW-1185">Reference proteome</keyword>
<dbReference type="EMBL" id="X83696">
    <property type="protein sequence ID" value="CAA58671.1"/>
    <property type="molecule type" value="mRNA"/>
</dbReference>
<dbReference type="SMR" id="Q41874"/>
<dbReference type="STRING" id="4577.Q41874"/>
<dbReference type="InParanoid" id="Q41874"/>
<dbReference type="Proteomes" id="UP000007305">
    <property type="component" value="Unplaced"/>
</dbReference>
<dbReference type="ExpressionAtlas" id="Q41874">
    <property type="expression patterns" value="baseline and differential"/>
</dbReference>
<dbReference type="GO" id="GO:0005737">
    <property type="term" value="C:cytoplasm"/>
    <property type="evidence" value="ECO:0007669"/>
    <property type="project" value="UniProtKB-KW"/>
</dbReference>
<dbReference type="GO" id="GO:0000931">
    <property type="term" value="C:gamma-tubulin ring complex"/>
    <property type="evidence" value="ECO:0000318"/>
    <property type="project" value="GO_Central"/>
</dbReference>
<dbReference type="GO" id="GO:0005874">
    <property type="term" value="C:microtubule"/>
    <property type="evidence" value="ECO:0007669"/>
    <property type="project" value="UniProtKB-KW"/>
</dbReference>
<dbReference type="GO" id="GO:0005634">
    <property type="term" value="C:nucleus"/>
    <property type="evidence" value="ECO:0000318"/>
    <property type="project" value="GO_Central"/>
</dbReference>
<dbReference type="GO" id="GO:0005819">
    <property type="term" value="C:spindle"/>
    <property type="evidence" value="ECO:0000318"/>
    <property type="project" value="GO_Central"/>
</dbReference>
<dbReference type="GO" id="GO:0005525">
    <property type="term" value="F:GTP binding"/>
    <property type="evidence" value="ECO:0000318"/>
    <property type="project" value="GO_Central"/>
</dbReference>
<dbReference type="GO" id="GO:0140490">
    <property type="term" value="F:microtubule nucleator activity"/>
    <property type="evidence" value="ECO:0000318"/>
    <property type="project" value="GO_Central"/>
</dbReference>
<dbReference type="GO" id="GO:0031122">
    <property type="term" value="P:cytoplasmic microtubule organization"/>
    <property type="evidence" value="ECO:0007669"/>
    <property type="project" value="InterPro"/>
</dbReference>
<dbReference type="GO" id="GO:0000212">
    <property type="term" value="P:meiotic spindle organization"/>
    <property type="evidence" value="ECO:0000318"/>
    <property type="project" value="GO_Central"/>
</dbReference>
<dbReference type="GO" id="GO:0007020">
    <property type="term" value="P:microtubule nucleation"/>
    <property type="evidence" value="ECO:0000318"/>
    <property type="project" value="GO_Central"/>
</dbReference>
<dbReference type="GO" id="GO:0000278">
    <property type="term" value="P:mitotic cell cycle"/>
    <property type="evidence" value="ECO:0000318"/>
    <property type="project" value="GO_Central"/>
</dbReference>
<dbReference type="GO" id="GO:0000070">
    <property type="term" value="P:mitotic sister chromatid segregation"/>
    <property type="evidence" value="ECO:0000318"/>
    <property type="project" value="GO_Central"/>
</dbReference>
<dbReference type="GO" id="GO:0007052">
    <property type="term" value="P:mitotic spindle organization"/>
    <property type="evidence" value="ECO:0000318"/>
    <property type="project" value="GO_Central"/>
</dbReference>
<dbReference type="CDD" id="cd02188">
    <property type="entry name" value="gamma_tubulin"/>
    <property type="match status" value="1"/>
</dbReference>
<dbReference type="FunFam" id="1.10.287.600:FF:000004">
    <property type="entry name" value="Tubulin gamma chain"/>
    <property type="match status" value="1"/>
</dbReference>
<dbReference type="FunFam" id="3.30.1330.20:FF:000003">
    <property type="entry name" value="Tubulin gamma chain"/>
    <property type="match status" value="1"/>
</dbReference>
<dbReference type="Gene3D" id="1.10.287.600">
    <property type="entry name" value="Helix hairpin bin"/>
    <property type="match status" value="1"/>
</dbReference>
<dbReference type="Gene3D" id="3.30.1330.20">
    <property type="entry name" value="Tubulin/FtsZ, C-terminal domain"/>
    <property type="match status" value="1"/>
</dbReference>
<dbReference type="Gene3D" id="3.40.50.1440">
    <property type="entry name" value="Tubulin/FtsZ, GTPase domain"/>
    <property type="match status" value="1"/>
</dbReference>
<dbReference type="InterPro" id="IPR002454">
    <property type="entry name" value="Gamma_tubulin"/>
</dbReference>
<dbReference type="InterPro" id="IPR008280">
    <property type="entry name" value="Tub_FtsZ_C"/>
</dbReference>
<dbReference type="InterPro" id="IPR000217">
    <property type="entry name" value="Tubulin"/>
</dbReference>
<dbReference type="InterPro" id="IPR037103">
    <property type="entry name" value="Tubulin/FtsZ-like_C"/>
</dbReference>
<dbReference type="InterPro" id="IPR018316">
    <property type="entry name" value="Tubulin/FtsZ_2-layer-sand-dom"/>
</dbReference>
<dbReference type="InterPro" id="IPR036525">
    <property type="entry name" value="Tubulin/FtsZ_GTPase_sf"/>
</dbReference>
<dbReference type="InterPro" id="IPR023123">
    <property type="entry name" value="Tubulin_C"/>
</dbReference>
<dbReference type="InterPro" id="IPR017975">
    <property type="entry name" value="Tubulin_CS"/>
</dbReference>
<dbReference type="InterPro" id="IPR003008">
    <property type="entry name" value="Tubulin_FtsZ_GTPase"/>
</dbReference>
<dbReference type="PANTHER" id="PTHR11588">
    <property type="entry name" value="TUBULIN"/>
    <property type="match status" value="1"/>
</dbReference>
<dbReference type="Pfam" id="PF00091">
    <property type="entry name" value="Tubulin"/>
    <property type="match status" value="1"/>
</dbReference>
<dbReference type="Pfam" id="PF03953">
    <property type="entry name" value="Tubulin_C"/>
    <property type="match status" value="1"/>
</dbReference>
<dbReference type="PRINTS" id="PR01164">
    <property type="entry name" value="GAMMATUBULIN"/>
</dbReference>
<dbReference type="PRINTS" id="PR01161">
    <property type="entry name" value="TUBULIN"/>
</dbReference>
<dbReference type="SMART" id="SM00864">
    <property type="entry name" value="Tubulin"/>
    <property type="match status" value="1"/>
</dbReference>
<dbReference type="SMART" id="SM00865">
    <property type="entry name" value="Tubulin_C"/>
    <property type="match status" value="1"/>
</dbReference>
<dbReference type="SUPFAM" id="SSF55307">
    <property type="entry name" value="Tubulin C-terminal domain-like"/>
    <property type="match status" value="1"/>
</dbReference>
<dbReference type="SUPFAM" id="SSF52490">
    <property type="entry name" value="Tubulin nucleotide-binding domain-like"/>
    <property type="match status" value="1"/>
</dbReference>
<dbReference type="PROSITE" id="PS00227">
    <property type="entry name" value="TUBULIN"/>
    <property type="match status" value="1"/>
</dbReference>
<evidence type="ECO:0000250" key="1">
    <source>
        <dbReference type="UniProtKB" id="P38557"/>
    </source>
</evidence>
<evidence type="ECO:0000255" key="2"/>
<evidence type="ECO:0000305" key="3"/>
<protein>
    <recommendedName>
        <fullName>Tubulin gamma-3 chain</fullName>
    </recommendedName>
    <alternativeName>
        <fullName>Gamma-3-tubulin</fullName>
    </alternativeName>
</protein>
<proteinExistence type="evidence at transcript level"/>
<name>TBG3_MAIZE</name>
<accession>Q41874</accession>
<reference key="1">
    <citation type="submission" date="1995-01" db="EMBL/GenBank/DDBJ databases">
        <title>Identification of two maize cDNAs encoding gamma-tubulin.</title>
        <authorList>
            <person name="Canaday J."/>
            <person name="Stoppin V."/>
            <person name="Endle M.C."/>
            <person name="Lambert A.M."/>
        </authorList>
    </citation>
    <scope>NUCLEOTIDE SEQUENCE [MRNA]</scope>
    <source>
        <strain>cv. Black Mexican Sweet</strain>
    </source>
</reference>
<sequence length="421" mass="47541">DVFFYQADDQHFIPRSLLIDLEPRVINGIQNSEYRNLYNHENIFVAEHGGGAGNNWASGYHQGEQFVDDIMDMVDREADGSDSLEGFVLCHSIAGGTGSGMGSYLLETLNDRYSKKLVQTYSVFPNQVETSDVVVQPYNSLLTLKRLTLNADCVVVLDNTALNRIAVERLHLSNPTFAQTNSLVSTVMSASTTTLRYPGYMNNDLVGLLASLIPTPRCHFLMTGYTPLTVERQVNMIRKTTVLDVMRRLLQTKNIMVSSYARTKEASQAKYISILNIIQGEVDPTQVHESLQRIRERKLVNFIDWAPASIQVALSRKSPYVQTTHRVSGLMLANHTSIRHLFSKCLGQYEKLRKKQAFLDNYRKFPMFADNDLSEFDESREIIESLVDEYKACESPDYIKWGMEDPGEANVVAALDSKLVV</sequence>
<comment type="function">
    <text>Tubulin is the major constituent of microtubules. The gamma chain is found at microtubule organizing centers (MTOC) such as the spindle poles, suggesting that it is involved in the minus-end nucleation of microtubule assembly.</text>
</comment>
<comment type="subcellular location">
    <subcellularLocation>
        <location evidence="1">Cytoplasm</location>
        <location evidence="1">Cytoskeleton</location>
        <location evidence="1">Microtubule organizing center</location>
    </subcellularLocation>
</comment>
<comment type="similarity">
    <text evidence="3">Belongs to the tubulin family.</text>
</comment>